<accession>A5EY32</accession>
<reference key="1">
    <citation type="journal article" date="2007" name="Nat. Biotechnol.">
        <title>Genome sequence and identification of candidate vaccine antigens from the animal pathogen Dichelobacter nodosus.</title>
        <authorList>
            <person name="Myers G.S.A."/>
            <person name="Parker D."/>
            <person name="Al-Hasani K."/>
            <person name="Kennan R.M."/>
            <person name="Seemann T."/>
            <person name="Ren Q."/>
            <person name="Badger J.H."/>
            <person name="Selengut J.D."/>
            <person name="Deboy R.T."/>
            <person name="Tettelin H."/>
            <person name="Boyce J.D."/>
            <person name="McCarl V.P."/>
            <person name="Han X."/>
            <person name="Nelson W.C."/>
            <person name="Madupu R."/>
            <person name="Mohamoud Y."/>
            <person name="Holley T."/>
            <person name="Fedorova N."/>
            <person name="Khouri H."/>
            <person name="Bottomley S.P."/>
            <person name="Whittington R.J."/>
            <person name="Adler B."/>
            <person name="Songer J.G."/>
            <person name="Rood J.I."/>
            <person name="Paulsen I.T."/>
        </authorList>
    </citation>
    <scope>NUCLEOTIDE SEQUENCE [LARGE SCALE GENOMIC DNA]</scope>
    <source>
        <strain>VCS1703A</strain>
    </source>
</reference>
<gene>
    <name evidence="1" type="primary">rpmH</name>
    <name type="ordered locus">DNO_0952</name>
</gene>
<comment type="similarity">
    <text evidence="1">Belongs to the bacterial ribosomal protein bL34 family.</text>
</comment>
<protein>
    <recommendedName>
        <fullName evidence="1">Large ribosomal subunit protein bL34</fullName>
    </recommendedName>
    <alternativeName>
        <fullName evidence="3">50S ribosomal protein L34</fullName>
    </alternativeName>
</protein>
<dbReference type="EMBL" id="CP000513">
    <property type="protein sequence ID" value="ABQ13933.1"/>
    <property type="molecule type" value="Genomic_DNA"/>
</dbReference>
<dbReference type="RefSeq" id="WP_012031265.1">
    <property type="nucleotide sequence ID" value="NC_009446.1"/>
</dbReference>
<dbReference type="SMR" id="A5EY32"/>
<dbReference type="STRING" id="246195.DNO_0952"/>
<dbReference type="KEGG" id="dno:DNO_0952"/>
<dbReference type="eggNOG" id="COG0230">
    <property type="taxonomic scope" value="Bacteria"/>
</dbReference>
<dbReference type="HOGENOM" id="CLU_129938_2_0_6"/>
<dbReference type="OrthoDB" id="9804164at2"/>
<dbReference type="Proteomes" id="UP000000248">
    <property type="component" value="Chromosome"/>
</dbReference>
<dbReference type="GO" id="GO:1990904">
    <property type="term" value="C:ribonucleoprotein complex"/>
    <property type="evidence" value="ECO:0007669"/>
    <property type="project" value="UniProtKB-KW"/>
</dbReference>
<dbReference type="GO" id="GO:0005840">
    <property type="term" value="C:ribosome"/>
    <property type="evidence" value="ECO:0007669"/>
    <property type="project" value="UniProtKB-KW"/>
</dbReference>
<dbReference type="GO" id="GO:0003735">
    <property type="term" value="F:structural constituent of ribosome"/>
    <property type="evidence" value="ECO:0007669"/>
    <property type="project" value="InterPro"/>
</dbReference>
<dbReference type="GO" id="GO:0006412">
    <property type="term" value="P:translation"/>
    <property type="evidence" value="ECO:0007669"/>
    <property type="project" value="UniProtKB-UniRule"/>
</dbReference>
<dbReference type="FunFam" id="1.10.287.3980:FF:000001">
    <property type="entry name" value="Mitochondrial ribosomal protein L34"/>
    <property type="match status" value="1"/>
</dbReference>
<dbReference type="Gene3D" id="1.10.287.3980">
    <property type="match status" value="1"/>
</dbReference>
<dbReference type="HAMAP" id="MF_00391">
    <property type="entry name" value="Ribosomal_bL34"/>
    <property type="match status" value="1"/>
</dbReference>
<dbReference type="InterPro" id="IPR000271">
    <property type="entry name" value="Ribosomal_bL34"/>
</dbReference>
<dbReference type="InterPro" id="IPR020939">
    <property type="entry name" value="Ribosomal_bL34_CS"/>
</dbReference>
<dbReference type="NCBIfam" id="TIGR01030">
    <property type="entry name" value="rpmH_bact"/>
    <property type="match status" value="1"/>
</dbReference>
<dbReference type="PANTHER" id="PTHR14503:SF4">
    <property type="entry name" value="LARGE RIBOSOMAL SUBUNIT PROTEIN BL34M"/>
    <property type="match status" value="1"/>
</dbReference>
<dbReference type="PANTHER" id="PTHR14503">
    <property type="entry name" value="MITOCHONDRIAL RIBOSOMAL PROTEIN 34 FAMILY MEMBER"/>
    <property type="match status" value="1"/>
</dbReference>
<dbReference type="Pfam" id="PF00468">
    <property type="entry name" value="Ribosomal_L34"/>
    <property type="match status" value="1"/>
</dbReference>
<dbReference type="PROSITE" id="PS00784">
    <property type="entry name" value="RIBOSOMAL_L34"/>
    <property type="match status" value="1"/>
</dbReference>
<proteinExistence type="inferred from homology"/>
<evidence type="ECO:0000255" key="1">
    <source>
        <dbReference type="HAMAP-Rule" id="MF_00391"/>
    </source>
</evidence>
<evidence type="ECO:0000256" key="2">
    <source>
        <dbReference type="SAM" id="MobiDB-lite"/>
    </source>
</evidence>
<evidence type="ECO:0000305" key="3"/>
<keyword id="KW-1185">Reference proteome</keyword>
<keyword id="KW-0687">Ribonucleoprotein</keyword>
<keyword id="KW-0689">Ribosomal protein</keyword>
<feature type="chain" id="PRO_1000013333" description="Large ribosomal subunit protein bL34">
    <location>
        <begin position="1"/>
        <end position="45"/>
    </location>
</feature>
<feature type="region of interest" description="Disordered" evidence="2">
    <location>
        <begin position="1"/>
        <end position="45"/>
    </location>
</feature>
<feature type="compositionally biased region" description="Polar residues" evidence="2">
    <location>
        <begin position="1"/>
        <end position="11"/>
    </location>
</feature>
<feature type="compositionally biased region" description="Basic residues" evidence="2">
    <location>
        <begin position="32"/>
        <end position="45"/>
    </location>
</feature>
<name>RL34_DICNV</name>
<organism>
    <name type="scientific">Dichelobacter nodosus (strain VCS1703A)</name>
    <dbReference type="NCBI Taxonomy" id="246195"/>
    <lineage>
        <taxon>Bacteria</taxon>
        <taxon>Pseudomonadati</taxon>
        <taxon>Pseudomonadota</taxon>
        <taxon>Gammaproteobacteria</taxon>
        <taxon>Cardiobacteriales</taxon>
        <taxon>Cardiobacteriaceae</taxon>
        <taxon>Dichelobacter</taxon>
    </lineage>
</organism>
<sequence length="45" mass="5362">MSKRTFQPSNLSRKRTHGFRARMATKNGRQVLSRRRAKGRYRLTV</sequence>